<reference key="1">
    <citation type="journal article" date="2006" name="Nat. Biotechnol.">
        <title>Genome sequence of the ubiquitous hydrocarbon-degrading marine bacterium Alcanivorax borkumensis.</title>
        <authorList>
            <person name="Schneiker S."/>
            <person name="Martins dos Santos V.A.P."/>
            <person name="Bartels D."/>
            <person name="Bekel T."/>
            <person name="Brecht M."/>
            <person name="Buhrmester J."/>
            <person name="Chernikova T.N."/>
            <person name="Denaro R."/>
            <person name="Ferrer M."/>
            <person name="Gertler C."/>
            <person name="Goesmann A."/>
            <person name="Golyshina O.V."/>
            <person name="Kaminski F."/>
            <person name="Khachane A.N."/>
            <person name="Lang S."/>
            <person name="Linke B."/>
            <person name="McHardy A.C."/>
            <person name="Meyer F."/>
            <person name="Nechitaylo T."/>
            <person name="Puehler A."/>
            <person name="Regenhardt D."/>
            <person name="Rupp O."/>
            <person name="Sabirova J.S."/>
            <person name="Selbitschka W."/>
            <person name="Yakimov M.M."/>
            <person name="Timmis K.N."/>
            <person name="Vorhoelter F.-J."/>
            <person name="Weidner S."/>
            <person name="Kaiser O."/>
            <person name="Golyshin P.N."/>
        </authorList>
    </citation>
    <scope>NUCLEOTIDE SEQUENCE [LARGE SCALE GENOMIC DNA]</scope>
    <source>
        <strain>ATCC 700651 / DSM 11573 / NCIMB 13689 / SK2</strain>
    </source>
</reference>
<evidence type="ECO:0000255" key="1">
    <source>
        <dbReference type="HAMAP-Rule" id="MF_01517"/>
    </source>
</evidence>
<protein>
    <recommendedName>
        <fullName evidence="1">Malate dehydrogenase</fullName>
        <ecNumber evidence="1">1.1.1.37</ecNumber>
    </recommendedName>
</protein>
<accession>Q0VQ52</accession>
<comment type="function">
    <text evidence="1">Catalyzes the reversible oxidation of malate to oxaloacetate.</text>
</comment>
<comment type="catalytic activity">
    <reaction evidence="1">
        <text>(S)-malate + NAD(+) = oxaloacetate + NADH + H(+)</text>
        <dbReference type="Rhea" id="RHEA:21432"/>
        <dbReference type="ChEBI" id="CHEBI:15378"/>
        <dbReference type="ChEBI" id="CHEBI:15589"/>
        <dbReference type="ChEBI" id="CHEBI:16452"/>
        <dbReference type="ChEBI" id="CHEBI:57540"/>
        <dbReference type="ChEBI" id="CHEBI:57945"/>
        <dbReference type="EC" id="1.1.1.37"/>
    </reaction>
</comment>
<comment type="similarity">
    <text evidence="1">Belongs to the LDH/MDH superfamily. MDH type 2 family.</text>
</comment>
<organism>
    <name type="scientific">Alcanivorax borkumensis (strain ATCC 700651 / DSM 11573 / NCIMB 13689 / SK2)</name>
    <dbReference type="NCBI Taxonomy" id="393595"/>
    <lineage>
        <taxon>Bacteria</taxon>
        <taxon>Pseudomonadati</taxon>
        <taxon>Pseudomonadota</taxon>
        <taxon>Gammaproteobacteria</taxon>
        <taxon>Oceanospirillales</taxon>
        <taxon>Alcanivoracaceae</taxon>
        <taxon>Alcanivorax</taxon>
    </lineage>
</organism>
<keyword id="KW-0520">NAD</keyword>
<keyword id="KW-0560">Oxidoreductase</keyword>
<keyword id="KW-1185">Reference proteome</keyword>
<keyword id="KW-0816">Tricarboxylic acid cycle</keyword>
<proteinExistence type="inferred from homology"/>
<dbReference type="EC" id="1.1.1.37" evidence="1"/>
<dbReference type="EMBL" id="AM286690">
    <property type="protein sequence ID" value="CAL16696.1"/>
    <property type="molecule type" value="Genomic_DNA"/>
</dbReference>
<dbReference type="SMR" id="Q0VQ52"/>
<dbReference type="STRING" id="393595.ABO_1248"/>
<dbReference type="KEGG" id="abo:ABO_1248"/>
<dbReference type="eggNOG" id="COG0039">
    <property type="taxonomic scope" value="Bacteria"/>
</dbReference>
<dbReference type="HOGENOM" id="CLU_040727_2_0_6"/>
<dbReference type="Proteomes" id="UP000008871">
    <property type="component" value="Chromosome"/>
</dbReference>
<dbReference type="GO" id="GO:0030060">
    <property type="term" value="F:L-malate dehydrogenase (NAD+) activity"/>
    <property type="evidence" value="ECO:0007669"/>
    <property type="project" value="UniProtKB-UniRule"/>
</dbReference>
<dbReference type="GO" id="GO:0006108">
    <property type="term" value="P:malate metabolic process"/>
    <property type="evidence" value="ECO:0007669"/>
    <property type="project" value="InterPro"/>
</dbReference>
<dbReference type="GO" id="GO:0006099">
    <property type="term" value="P:tricarboxylic acid cycle"/>
    <property type="evidence" value="ECO:0007669"/>
    <property type="project" value="UniProtKB-UniRule"/>
</dbReference>
<dbReference type="CDD" id="cd01338">
    <property type="entry name" value="MDH_chloroplast-like"/>
    <property type="match status" value="1"/>
</dbReference>
<dbReference type="FunFam" id="3.40.50.720:FF:000010">
    <property type="entry name" value="Malate dehydrogenase"/>
    <property type="match status" value="1"/>
</dbReference>
<dbReference type="FunFam" id="3.90.110.10:FF:000002">
    <property type="entry name" value="Malate dehydrogenase"/>
    <property type="match status" value="1"/>
</dbReference>
<dbReference type="Gene3D" id="3.90.110.10">
    <property type="entry name" value="Lactate dehydrogenase/glycoside hydrolase, family 4, C-terminal"/>
    <property type="match status" value="1"/>
</dbReference>
<dbReference type="Gene3D" id="3.40.50.720">
    <property type="entry name" value="NAD(P)-binding Rossmann-like Domain"/>
    <property type="match status" value="1"/>
</dbReference>
<dbReference type="HAMAP" id="MF_01517">
    <property type="entry name" value="Malate_dehydrog_2"/>
    <property type="match status" value="1"/>
</dbReference>
<dbReference type="InterPro" id="IPR001557">
    <property type="entry name" value="L-lactate/malate_DH"/>
</dbReference>
<dbReference type="InterPro" id="IPR022383">
    <property type="entry name" value="Lactate/malate_DH_C"/>
</dbReference>
<dbReference type="InterPro" id="IPR001236">
    <property type="entry name" value="Lactate/malate_DH_N"/>
</dbReference>
<dbReference type="InterPro" id="IPR015955">
    <property type="entry name" value="Lactate_DH/Glyco_Ohase_4_C"/>
</dbReference>
<dbReference type="InterPro" id="IPR001252">
    <property type="entry name" value="Malate_DH_AS"/>
</dbReference>
<dbReference type="InterPro" id="IPR010945">
    <property type="entry name" value="Malate_DH_type2"/>
</dbReference>
<dbReference type="InterPro" id="IPR036291">
    <property type="entry name" value="NAD(P)-bd_dom_sf"/>
</dbReference>
<dbReference type="NCBIfam" id="TIGR01759">
    <property type="entry name" value="MalateDH-SF1"/>
    <property type="match status" value="1"/>
</dbReference>
<dbReference type="NCBIfam" id="NF003916">
    <property type="entry name" value="PRK05442.1"/>
    <property type="match status" value="1"/>
</dbReference>
<dbReference type="PANTHER" id="PTHR23382">
    <property type="entry name" value="MALATE DEHYDROGENASE"/>
    <property type="match status" value="1"/>
</dbReference>
<dbReference type="Pfam" id="PF02866">
    <property type="entry name" value="Ldh_1_C"/>
    <property type="match status" value="1"/>
</dbReference>
<dbReference type="Pfam" id="PF00056">
    <property type="entry name" value="Ldh_1_N"/>
    <property type="match status" value="1"/>
</dbReference>
<dbReference type="PIRSF" id="PIRSF000102">
    <property type="entry name" value="Lac_mal_DH"/>
    <property type="match status" value="1"/>
</dbReference>
<dbReference type="SUPFAM" id="SSF56327">
    <property type="entry name" value="LDH C-terminal domain-like"/>
    <property type="match status" value="1"/>
</dbReference>
<dbReference type="SUPFAM" id="SSF51735">
    <property type="entry name" value="NAD(P)-binding Rossmann-fold domains"/>
    <property type="match status" value="1"/>
</dbReference>
<dbReference type="PROSITE" id="PS00068">
    <property type="entry name" value="MDH"/>
    <property type="match status" value="1"/>
</dbReference>
<gene>
    <name evidence="1" type="primary">mdh</name>
    <name type="ordered locus">ABO_1248</name>
</gene>
<name>MDH_ALCBS</name>
<sequence>MFMKAPVRVAVTGAAGQISYSLLFRIASGDMLGKDQPVILQLLEITPALEALNGVIMELEDCAFPLVAGITGTDDANVAFKDADYALLVGARPRGPGMERKDLLEANAAIFSAQGKAINDNASKGIKVLVVGNPANTNALIAQRNAPDIDPRQFTAMTRLDHNRAMAQLANKLGKTVNDVKKMLIWGNHSSTQYPDLHHCEVDGKVAIDQVEQDWYENDYIPTVQQRGAAIIKARGASSAASAANAAVDHMRSWALGTDEGDWVSMGIYSDGSYGIQEGLIYSFPCTCKNGDWTIVQGLEVNDFSRGKMQATEQELAEERDAVSHLLP</sequence>
<feature type="chain" id="PRO_0000294372" description="Malate dehydrogenase">
    <location>
        <begin position="1"/>
        <end position="328"/>
    </location>
</feature>
<feature type="active site" description="Proton acceptor" evidence="1">
    <location>
        <position position="189"/>
    </location>
</feature>
<feature type="binding site" evidence="1">
    <location>
        <begin position="13"/>
        <end position="19"/>
    </location>
    <ligand>
        <name>NAD(+)</name>
        <dbReference type="ChEBI" id="CHEBI:57540"/>
    </ligand>
</feature>
<feature type="binding site" evidence="1">
    <location>
        <position position="94"/>
    </location>
    <ligand>
        <name>substrate</name>
    </ligand>
</feature>
<feature type="binding site" evidence="1">
    <location>
        <position position="100"/>
    </location>
    <ligand>
        <name>substrate</name>
    </ligand>
</feature>
<feature type="binding site" evidence="1">
    <location>
        <position position="107"/>
    </location>
    <ligand>
        <name>NAD(+)</name>
        <dbReference type="ChEBI" id="CHEBI:57540"/>
    </ligand>
</feature>
<feature type="binding site" evidence="1">
    <location>
        <position position="114"/>
    </location>
    <ligand>
        <name>NAD(+)</name>
        <dbReference type="ChEBI" id="CHEBI:57540"/>
    </ligand>
</feature>
<feature type="binding site" evidence="1">
    <location>
        <begin position="131"/>
        <end position="133"/>
    </location>
    <ligand>
        <name>NAD(+)</name>
        <dbReference type="ChEBI" id="CHEBI:57540"/>
    </ligand>
</feature>
<feature type="binding site" evidence="1">
    <location>
        <position position="133"/>
    </location>
    <ligand>
        <name>substrate</name>
    </ligand>
</feature>
<feature type="binding site" evidence="1">
    <location>
        <position position="164"/>
    </location>
    <ligand>
        <name>substrate</name>
    </ligand>
</feature>